<dbReference type="GO" id="GO:0005576">
    <property type="term" value="C:extracellular region"/>
    <property type="evidence" value="ECO:0007669"/>
    <property type="project" value="UniProtKB-SubCell"/>
</dbReference>
<dbReference type="GO" id="GO:0090729">
    <property type="term" value="F:toxin activity"/>
    <property type="evidence" value="ECO:0007669"/>
    <property type="project" value="UniProtKB-KW"/>
</dbReference>
<dbReference type="GO" id="GO:0042742">
    <property type="term" value="P:defense response to bacterium"/>
    <property type="evidence" value="ECO:0007669"/>
    <property type="project" value="InterPro"/>
</dbReference>
<dbReference type="InterPro" id="IPR035164">
    <property type="entry name" value="Cupiennin"/>
</dbReference>
<dbReference type="Pfam" id="PF17563">
    <property type="entry name" value="Cu"/>
    <property type="match status" value="1"/>
</dbReference>
<feature type="peptide" id="PRO_0000421204" description="Short cationic peptide-1e" evidence="1">
    <location>
        <begin position="1"/>
        <end position="15"/>
    </location>
</feature>
<comment type="subcellular location">
    <subcellularLocation>
        <location evidence="1">Secreted</location>
    </subcellularLocation>
</comment>
<comment type="tissue specificity">
    <text evidence="4">Expressed by the venom gland.</text>
</comment>
<comment type="mass spectrometry"/>
<comment type="similarity">
    <text evidence="3">Belongs to the cationic peptide 04 (cupiennin) family. 08 subfamily.</text>
</comment>
<reference key="1">
    <citation type="journal article" date="2012" name="FEBS J.">
        <title>Multicomponent venom of the spider Cupiennius salei: a bioanalytical investigation applying different strategies.</title>
        <authorList>
            <person name="Trachsel C."/>
            <person name="Siegemund D."/>
            <person name="Kampfer U."/>
            <person name="Kopp L.S."/>
            <person name="Buhr C."/>
            <person name="Grossmann J."/>
            <person name="Luthi C."/>
            <person name="Cunningham M."/>
            <person name="Nentwig W."/>
            <person name="Kuhn-Nentwig L."/>
            <person name="Schurch S."/>
            <person name="Schaller J."/>
        </authorList>
    </citation>
    <scope>PROTEIN SEQUENCE</scope>
    <scope>MASS SPECTROMETRY</scope>
    <source>
        <tissue>Venom</tissue>
    </source>
</reference>
<protein>
    <recommendedName>
        <fullName evidence="2">Short cationic peptide-1e</fullName>
        <shortName evidence="2">SCP-1e</shortName>
    </recommendedName>
    <alternativeName>
        <fullName evidence="2">Cupiennin 1-like peptide-1e</fullName>
    </alternativeName>
    <alternativeName>
        <fullName evidence="3">Truncated variant of Cupiennin 1 family</fullName>
    </alternativeName>
</protein>
<accession>B3EWU5</accession>
<proteinExistence type="evidence at protein level"/>
<keyword id="KW-0903">Direct protein sequencing</keyword>
<keyword id="KW-0964">Secreted</keyword>
<keyword id="KW-0800">Toxin</keyword>
<name>TXS1E_CUPSA</name>
<sequence>GFGSLFKFLAKKVAK</sequence>
<evidence type="ECO:0000269" key="1">
    <source>
    </source>
</evidence>
<evidence type="ECO:0000303" key="2">
    <source>
    </source>
</evidence>
<evidence type="ECO:0000305" key="3"/>
<evidence type="ECO:0000305" key="4">
    <source>
    </source>
</evidence>
<organism>
    <name type="scientific">Cupiennius salei</name>
    <name type="common">American wandering spider</name>
    <dbReference type="NCBI Taxonomy" id="6928"/>
    <lineage>
        <taxon>Eukaryota</taxon>
        <taxon>Metazoa</taxon>
        <taxon>Ecdysozoa</taxon>
        <taxon>Arthropoda</taxon>
        <taxon>Chelicerata</taxon>
        <taxon>Arachnida</taxon>
        <taxon>Araneae</taxon>
        <taxon>Araneomorphae</taxon>
        <taxon>Entelegynae</taxon>
        <taxon>Lycosoidea</taxon>
        <taxon>Ctenidae</taxon>
        <taxon>Cupiennius</taxon>
    </lineage>
</organism>